<comment type="function">
    <text evidence="1">One of the primary rRNA binding proteins, it binds directly to 16S rRNA central domain where it helps coordinate assembly of the platform of the 30S subunit.</text>
</comment>
<comment type="subunit">
    <text evidence="1">Part of the 30S ribosomal subunit. Contacts proteins S5 and S12.</text>
</comment>
<comment type="similarity">
    <text evidence="1">Belongs to the universal ribosomal protein uS8 family.</text>
</comment>
<reference key="1">
    <citation type="journal article" date="2008" name="Antimicrob. Agents Chemother.">
        <title>Mutated response regulator graR is responsible for phenotypic conversion of Staphylococcus aureus from heterogeneous vancomycin-intermediate resistance to vancomycin-intermediate resistance.</title>
        <authorList>
            <person name="Neoh H.-M."/>
            <person name="Cui L."/>
            <person name="Yuzawa H."/>
            <person name="Takeuchi F."/>
            <person name="Matsuo M."/>
            <person name="Hiramatsu K."/>
        </authorList>
    </citation>
    <scope>NUCLEOTIDE SEQUENCE [LARGE SCALE GENOMIC DNA]</scope>
    <source>
        <strain>Mu3 / ATCC 700698</strain>
    </source>
</reference>
<evidence type="ECO:0000255" key="1">
    <source>
        <dbReference type="HAMAP-Rule" id="MF_01302"/>
    </source>
</evidence>
<evidence type="ECO:0000305" key="2"/>
<proteinExistence type="inferred from homology"/>
<keyword id="KW-0687">Ribonucleoprotein</keyword>
<keyword id="KW-0689">Ribosomal protein</keyword>
<keyword id="KW-0694">RNA-binding</keyword>
<keyword id="KW-0699">rRNA-binding</keyword>
<name>RS8_STAA1</name>
<dbReference type="EMBL" id="AP009324">
    <property type="protein sequence ID" value="BAF79103.1"/>
    <property type="molecule type" value="Genomic_DNA"/>
</dbReference>
<dbReference type="RefSeq" id="WP_000178881.1">
    <property type="nucleotide sequence ID" value="NZ_CTYB01000025.1"/>
</dbReference>
<dbReference type="SMR" id="A7X5E2"/>
<dbReference type="GeneID" id="98346548"/>
<dbReference type="KEGG" id="saw:SAHV_2220"/>
<dbReference type="HOGENOM" id="CLU_098428_0_2_9"/>
<dbReference type="GO" id="GO:1990904">
    <property type="term" value="C:ribonucleoprotein complex"/>
    <property type="evidence" value="ECO:0007669"/>
    <property type="project" value="UniProtKB-KW"/>
</dbReference>
<dbReference type="GO" id="GO:0005840">
    <property type="term" value="C:ribosome"/>
    <property type="evidence" value="ECO:0007669"/>
    <property type="project" value="UniProtKB-KW"/>
</dbReference>
<dbReference type="GO" id="GO:0019843">
    <property type="term" value="F:rRNA binding"/>
    <property type="evidence" value="ECO:0007669"/>
    <property type="project" value="UniProtKB-UniRule"/>
</dbReference>
<dbReference type="GO" id="GO:0003735">
    <property type="term" value="F:structural constituent of ribosome"/>
    <property type="evidence" value="ECO:0007669"/>
    <property type="project" value="InterPro"/>
</dbReference>
<dbReference type="GO" id="GO:0006412">
    <property type="term" value="P:translation"/>
    <property type="evidence" value="ECO:0007669"/>
    <property type="project" value="UniProtKB-UniRule"/>
</dbReference>
<dbReference type="FunFam" id="3.30.1370.30:FF:000002">
    <property type="entry name" value="30S ribosomal protein S8"/>
    <property type="match status" value="1"/>
</dbReference>
<dbReference type="FunFam" id="3.30.1490.10:FF:000001">
    <property type="entry name" value="30S ribosomal protein S8"/>
    <property type="match status" value="1"/>
</dbReference>
<dbReference type="Gene3D" id="3.30.1370.30">
    <property type="match status" value="1"/>
</dbReference>
<dbReference type="Gene3D" id="3.30.1490.10">
    <property type="match status" value="1"/>
</dbReference>
<dbReference type="HAMAP" id="MF_01302_B">
    <property type="entry name" value="Ribosomal_uS8_B"/>
    <property type="match status" value="1"/>
</dbReference>
<dbReference type="InterPro" id="IPR000630">
    <property type="entry name" value="Ribosomal_uS8"/>
</dbReference>
<dbReference type="InterPro" id="IPR047863">
    <property type="entry name" value="Ribosomal_uS8_CS"/>
</dbReference>
<dbReference type="InterPro" id="IPR035987">
    <property type="entry name" value="Ribosomal_uS8_sf"/>
</dbReference>
<dbReference type="NCBIfam" id="NF001109">
    <property type="entry name" value="PRK00136.1"/>
    <property type="match status" value="1"/>
</dbReference>
<dbReference type="PANTHER" id="PTHR11758">
    <property type="entry name" value="40S RIBOSOMAL PROTEIN S15A"/>
    <property type="match status" value="1"/>
</dbReference>
<dbReference type="Pfam" id="PF00410">
    <property type="entry name" value="Ribosomal_S8"/>
    <property type="match status" value="1"/>
</dbReference>
<dbReference type="SUPFAM" id="SSF56047">
    <property type="entry name" value="Ribosomal protein S8"/>
    <property type="match status" value="1"/>
</dbReference>
<dbReference type="PROSITE" id="PS00053">
    <property type="entry name" value="RIBOSOMAL_S8"/>
    <property type="match status" value="1"/>
</dbReference>
<accession>A7X5E2</accession>
<sequence length="132" mass="14831">MTMTDPIADMLTRVRNANMVRHEKLELPASNIKKEIAEILKSEGFIKNVEYVEDDKQGVLRLFLKYGQNDERVITGLKRISKPGLRVYAKASEMPKVLNGLGIALVSTSEGVITDKEARKRNVGGEIIAYVW</sequence>
<protein>
    <recommendedName>
        <fullName evidence="1">Small ribosomal subunit protein uS8</fullName>
    </recommendedName>
    <alternativeName>
        <fullName evidence="2">30S ribosomal protein S8</fullName>
    </alternativeName>
</protein>
<feature type="chain" id="PRO_1000051802" description="Small ribosomal subunit protein uS8">
    <location>
        <begin position="1"/>
        <end position="132"/>
    </location>
</feature>
<gene>
    <name evidence="1" type="primary">rpsH</name>
    <name type="ordered locus">SAHV_2220</name>
</gene>
<organism>
    <name type="scientific">Staphylococcus aureus (strain Mu3 / ATCC 700698)</name>
    <dbReference type="NCBI Taxonomy" id="418127"/>
    <lineage>
        <taxon>Bacteria</taxon>
        <taxon>Bacillati</taxon>
        <taxon>Bacillota</taxon>
        <taxon>Bacilli</taxon>
        <taxon>Bacillales</taxon>
        <taxon>Staphylococcaceae</taxon>
        <taxon>Staphylococcus</taxon>
    </lineage>
</organism>